<keyword id="KW-0324">Glycolysis</keyword>
<keyword id="KW-0413">Isomerase</keyword>
<keyword id="KW-0464">Manganese</keyword>
<keyword id="KW-0479">Metal-binding</keyword>
<gene>
    <name evidence="1" type="primary">gpmI</name>
    <name type="ordered locus">EcHS_A3824</name>
</gene>
<comment type="function">
    <text evidence="1">Catalyzes the interconversion of 2-phosphoglycerate and 3-phosphoglycerate.</text>
</comment>
<comment type="catalytic activity">
    <reaction evidence="1">
        <text>(2R)-2-phosphoglycerate = (2R)-3-phosphoglycerate</text>
        <dbReference type="Rhea" id="RHEA:15901"/>
        <dbReference type="ChEBI" id="CHEBI:58272"/>
        <dbReference type="ChEBI" id="CHEBI:58289"/>
        <dbReference type="EC" id="5.4.2.12"/>
    </reaction>
</comment>
<comment type="cofactor">
    <cofactor evidence="1">
        <name>Mn(2+)</name>
        <dbReference type="ChEBI" id="CHEBI:29035"/>
    </cofactor>
    <text evidence="1">Binds 2 manganese ions per subunit.</text>
</comment>
<comment type="pathway">
    <text evidence="1">Carbohydrate degradation; glycolysis; pyruvate from D-glyceraldehyde 3-phosphate: step 3/5.</text>
</comment>
<comment type="subunit">
    <text evidence="1">Monomer.</text>
</comment>
<comment type="similarity">
    <text evidence="1">Belongs to the BPG-independent phosphoglycerate mutase family.</text>
</comment>
<evidence type="ECO:0000255" key="1">
    <source>
        <dbReference type="HAMAP-Rule" id="MF_01038"/>
    </source>
</evidence>
<accession>A8A677</accession>
<feature type="chain" id="PRO_1000063961" description="2,3-bisphosphoglycerate-independent phosphoglycerate mutase">
    <location>
        <begin position="1"/>
        <end position="514"/>
    </location>
</feature>
<feature type="active site" description="Phosphoserine intermediate" evidence="1">
    <location>
        <position position="64"/>
    </location>
</feature>
<feature type="binding site" evidence="1">
    <location>
        <position position="14"/>
    </location>
    <ligand>
        <name>Mn(2+)</name>
        <dbReference type="ChEBI" id="CHEBI:29035"/>
        <label>2</label>
    </ligand>
</feature>
<feature type="binding site" evidence="1">
    <location>
        <position position="64"/>
    </location>
    <ligand>
        <name>Mn(2+)</name>
        <dbReference type="ChEBI" id="CHEBI:29035"/>
        <label>2</label>
    </ligand>
</feature>
<feature type="binding site" evidence="1">
    <location>
        <position position="125"/>
    </location>
    <ligand>
        <name>substrate</name>
    </ligand>
</feature>
<feature type="binding site" evidence="1">
    <location>
        <begin position="155"/>
        <end position="156"/>
    </location>
    <ligand>
        <name>substrate</name>
    </ligand>
</feature>
<feature type="binding site" evidence="1">
    <location>
        <position position="187"/>
    </location>
    <ligand>
        <name>substrate</name>
    </ligand>
</feature>
<feature type="binding site" evidence="1">
    <location>
        <position position="193"/>
    </location>
    <ligand>
        <name>substrate</name>
    </ligand>
</feature>
<feature type="binding site" evidence="1">
    <location>
        <begin position="263"/>
        <end position="266"/>
    </location>
    <ligand>
        <name>substrate</name>
    </ligand>
</feature>
<feature type="binding site" evidence="1">
    <location>
        <position position="336"/>
    </location>
    <ligand>
        <name>substrate</name>
    </ligand>
</feature>
<feature type="binding site" evidence="1">
    <location>
        <position position="403"/>
    </location>
    <ligand>
        <name>Mn(2+)</name>
        <dbReference type="ChEBI" id="CHEBI:29035"/>
        <label>1</label>
    </ligand>
</feature>
<feature type="binding site" evidence="1">
    <location>
        <position position="407"/>
    </location>
    <ligand>
        <name>Mn(2+)</name>
        <dbReference type="ChEBI" id="CHEBI:29035"/>
        <label>1</label>
    </ligand>
</feature>
<feature type="binding site" evidence="1">
    <location>
        <position position="444"/>
    </location>
    <ligand>
        <name>Mn(2+)</name>
        <dbReference type="ChEBI" id="CHEBI:29035"/>
        <label>2</label>
    </ligand>
</feature>
<feature type="binding site" evidence="1">
    <location>
        <position position="445"/>
    </location>
    <ligand>
        <name>Mn(2+)</name>
        <dbReference type="ChEBI" id="CHEBI:29035"/>
        <label>2</label>
    </ligand>
</feature>
<feature type="binding site" evidence="1">
    <location>
        <position position="463"/>
    </location>
    <ligand>
        <name>Mn(2+)</name>
        <dbReference type="ChEBI" id="CHEBI:29035"/>
        <label>1</label>
    </ligand>
</feature>
<dbReference type="EC" id="5.4.2.12" evidence="1"/>
<dbReference type="EMBL" id="CP000802">
    <property type="protein sequence ID" value="ABV08031.1"/>
    <property type="molecule type" value="Genomic_DNA"/>
</dbReference>
<dbReference type="SMR" id="A8A677"/>
<dbReference type="KEGG" id="ecx:EcHS_A3824"/>
<dbReference type="HOGENOM" id="CLU_026099_2_0_6"/>
<dbReference type="UniPathway" id="UPA00109">
    <property type="reaction ID" value="UER00186"/>
</dbReference>
<dbReference type="GO" id="GO:0005829">
    <property type="term" value="C:cytosol"/>
    <property type="evidence" value="ECO:0007669"/>
    <property type="project" value="TreeGrafter"/>
</dbReference>
<dbReference type="GO" id="GO:0030145">
    <property type="term" value="F:manganese ion binding"/>
    <property type="evidence" value="ECO:0007669"/>
    <property type="project" value="UniProtKB-UniRule"/>
</dbReference>
<dbReference type="GO" id="GO:0004619">
    <property type="term" value="F:phosphoglycerate mutase activity"/>
    <property type="evidence" value="ECO:0007669"/>
    <property type="project" value="UniProtKB-EC"/>
</dbReference>
<dbReference type="GO" id="GO:0006007">
    <property type="term" value="P:glucose catabolic process"/>
    <property type="evidence" value="ECO:0007669"/>
    <property type="project" value="InterPro"/>
</dbReference>
<dbReference type="GO" id="GO:0006096">
    <property type="term" value="P:glycolytic process"/>
    <property type="evidence" value="ECO:0007669"/>
    <property type="project" value="UniProtKB-UniRule"/>
</dbReference>
<dbReference type="CDD" id="cd16010">
    <property type="entry name" value="iPGM"/>
    <property type="match status" value="1"/>
</dbReference>
<dbReference type="FunFam" id="3.40.1450.10:FF:000001">
    <property type="entry name" value="2,3-bisphosphoglycerate-independent phosphoglycerate mutase"/>
    <property type="match status" value="1"/>
</dbReference>
<dbReference type="FunFam" id="3.40.720.10:FF:000001">
    <property type="entry name" value="2,3-bisphosphoglycerate-independent phosphoglycerate mutase"/>
    <property type="match status" value="1"/>
</dbReference>
<dbReference type="Gene3D" id="3.40.720.10">
    <property type="entry name" value="Alkaline Phosphatase, subunit A"/>
    <property type="match status" value="1"/>
</dbReference>
<dbReference type="Gene3D" id="3.40.1450.10">
    <property type="entry name" value="BPG-independent phosphoglycerate mutase, domain B"/>
    <property type="match status" value="1"/>
</dbReference>
<dbReference type="HAMAP" id="MF_01038">
    <property type="entry name" value="GpmI"/>
    <property type="match status" value="1"/>
</dbReference>
<dbReference type="InterPro" id="IPR017850">
    <property type="entry name" value="Alkaline_phosphatase_core_sf"/>
</dbReference>
<dbReference type="InterPro" id="IPR011258">
    <property type="entry name" value="BPG-indep_PGM_N"/>
</dbReference>
<dbReference type="InterPro" id="IPR006124">
    <property type="entry name" value="Metalloenzyme"/>
</dbReference>
<dbReference type="InterPro" id="IPR036646">
    <property type="entry name" value="PGAM_B_sf"/>
</dbReference>
<dbReference type="InterPro" id="IPR005995">
    <property type="entry name" value="Pgm_bpd_ind"/>
</dbReference>
<dbReference type="NCBIfam" id="TIGR01307">
    <property type="entry name" value="pgm_bpd_ind"/>
    <property type="match status" value="1"/>
</dbReference>
<dbReference type="NCBIfam" id="NF003897">
    <property type="entry name" value="PRK05434.1-5"/>
    <property type="match status" value="1"/>
</dbReference>
<dbReference type="PANTHER" id="PTHR31637">
    <property type="entry name" value="2,3-BISPHOSPHOGLYCERATE-INDEPENDENT PHOSPHOGLYCERATE MUTASE"/>
    <property type="match status" value="1"/>
</dbReference>
<dbReference type="PANTHER" id="PTHR31637:SF0">
    <property type="entry name" value="2,3-BISPHOSPHOGLYCERATE-INDEPENDENT PHOSPHOGLYCERATE MUTASE"/>
    <property type="match status" value="1"/>
</dbReference>
<dbReference type="Pfam" id="PF06415">
    <property type="entry name" value="iPGM_N"/>
    <property type="match status" value="1"/>
</dbReference>
<dbReference type="Pfam" id="PF01676">
    <property type="entry name" value="Metalloenzyme"/>
    <property type="match status" value="1"/>
</dbReference>
<dbReference type="PIRSF" id="PIRSF001492">
    <property type="entry name" value="IPGAM"/>
    <property type="match status" value="1"/>
</dbReference>
<dbReference type="SUPFAM" id="SSF64158">
    <property type="entry name" value="2,3-Bisphosphoglycerate-independent phosphoglycerate mutase, substrate-binding domain"/>
    <property type="match status" value="1"/>
</dbReference>
<dbReference type="SUPFAM" id="SSF53649">
    <property type="entry name" value="Alkaline phosphatase-like"/>
    <property type="match status" value="1"/>
</dbReference>
<reference key="1">
    <citation type="journal article" date="2008" name="J. Bacteriol.">
        <title>The pangenome structure of Escherichia coli: comparative genomic analysis of E. coli commensal and pathogenic isolates.</title>
        <authorList>
            <person name="Rasko D.A."/>
            <person name="Rosovitz M.J."/>
            <person name="Myers G.S.A."/>
            <person name="Mongodin E.F."/>
            <person name="Fricke W.F."/>
            <person name="Gajer P."/>
            <person name="Crabtree J."/>
            <person name="Sebaihia M."/>
            <person name="Thomson N.R."/>
            <person name="Chaudhuri R."/>
            <person name="Henderson I.R."/>
            <person name="Sperandio V."/>
            <person name="Ravel J."/>
        </authorList>
    </citation>
    <scope>NUCLEOTIDE SEQUENCE [LARGE SCALE GENOMIC DNA]</scope>
    <source>
        <strain>HS</strain>
    </source>
</reference>
<proteinExistence type="inferred from homology"/>
<name>GPMI_ECOHS</name>
<sequence>MSVSKKPMVLVILDGYGYREEQQDNAIFSAKTPVMDALWANRPHTLIDASGLEVGLPDRQMGNSEVGHVNLGAGRIVYQDLTRLDVEIKDRAFFANPVLTGAVDKAKNAGKAVHIMGLLSAGGVHSHEDHIMAMVELAAERGAEKIYLHAFLDGRDTPPRSAESSLKKFEEKFAALGKGRVASIIGRYYAMDRDNRWDRVEKAYDLLTLAQGEFQADTAVAGLQAAYARDENDEFVKATVIRAEGQPDAAMEDGDALIFMNFRADRAREITRAFVNADFDGFARKKVVNVDFVMLTEYAADIKTAVAYPPASLVNTFGEWMAKNDKTQLRISETEKYAHVTFFFNGGVEESFKGEDRILINSPKVATYDLQPEMSSAELTEKLVAAIKSGKYDTIICNYPNGDMVGHTGVMEAAVKAVEALDHCVEEVAKAVESVGGQLLITADHGNAEQMRDPATGQAHTAHTNLPVPLIYVGDKNVKAVAGGKLSDIAPTMLSLMGMEIPQEMTGKPLFIVE</sequence>
<organism>
    <name type="scientific">Escherichia coli O9:H4 (strain HS)</name>
    <dbReference type="NCBI Taxonomy" id="331112"/>
    <lineage>
        <taxon>Bacteria</taxon>
        <taxon>Pseudomonadati</taxon>
        <taxon>Pseudomonadota</taxon>
        <taxon>Gammaproteobacteria</taxon>
        <taxon>Enterobacterales</taxon>
        <taxon>Enterobacteriaceae</taxon>
        <taxon>Escherichia</taxon>
    </lineage>
</organism>
<protein>
    <recommendedName>
        <fullName evidence="1">2,3-bisphosphoglycerate-independent phosphoglycerate mutase</fullName>
        <shortName evidence="1">BPG-independent PGAM</shortName>
        <shortName evidence="1">Phosphoglyceromutase</shortName>
        <shortName evidence="1">iPGM</shortName>
        <ecNumber evidence="1">5.4.2.12</ecNumber>
    </recommendedName>
</protein>